<reference key="1">
    <citation type="journal article" date="2007" name="Proc. Natl. Acad. Sci. U.S.A.">
        <title>Genome sequencing reveals complex secondary metabolome in the marine actinomycete Salinispora tropica.</title>
        <authorList>
            <person name="Udwary D.W."/>
            <person name="Zeigler L."/>
            <person name="Asolkar R.N."/>
            <person name="Singan V."/>
            <person name="Lapidus A."/>
            <person name="Fenical W."/>
            <person name="Jensen P.R."/>
            <person name="Moore B.S."/>
        </authorList>
    </citation>
    <scope>NUCLEOTIDE SEQUENCE [LARGE SCALE GENOMIC DNA]</scope>
    <source>
        <strain>ATCC BAA-916 / DSM 44818 / JCM 13857 / NBRC 105044 / CNB-440</strain>
    </source>
</reference>
<protein>
    <recommendedName>
        <fullName evidence="1">Aspartyl/glutamyl-tRNA(Asn/Gln) amidotransferase subunit B</fullName>
        <shortName evidence="1">Asp/Glu-ADT subunit B</shortName>
        <ecNumber evidence="1">6.3.5.-</ecNumber>
    </recommendedName>
</protein>
<gene>
    <name evidence="1" type="primary">gatB</name>
    <name type="ordered locus">Strop_1221</name>
</gene>
<keyword id="KW-0067">ATP-binding</keyword>
<keyword id="KW-0436">Ligase</keyword>
<keyword id="KW-0547">Nucleotide-binding</keyword>
<keyword id="KW-0648">Protein biosynthesis</keyword>
<keyword id="KW-1185">Reference proteome</keyword>
<feature type="chain" id="PRO_1000095242" description="Aspartyl/glutamyl-tRNA(Asn/Gln) amidotransferase subunit B">
    <location>
        <begin position="1"/>
        <end position="499"/>
    </location>
</feature>
<accession>A4X491</accession>
<proteinExistence type="inferred from homology"/>
<sequence length="499" mass="53726">MTTTLPAYDEVVARYEPVIGLETHVELGTNTKMFCGCPTDFGGAPNTRVCPVCLGLPGSLPVANRAAVEATIRIGLALNCSIAEWCRFARKNYYYPDMPKNYQISQYDEPLCVDGYLDVEVDGEPVRISIERVHMEEDTGKTLHVGGATGRIHGATESLVDYNRAGIPLVEIVTKPIPGAGAMAPEVARAYVTELRDVLRSLGVSDVRMEEGSLRCDVNTSLNLPGEQWGTRTETKNVNSLRSVERAVRSEMIRQASVLEGGGRITQETRHFHEDTGDTTSGRSKETATDYRYFPEPDLVPVAPDPTWVAELKAALPELPRLHRRRLQQEWGLSDLDMQSILNAGAVELIEATIAAGATPTAARKWWLGELSRRANEAGVELADIGATPEQVAELQGLVDAGKLTDKLARTVLEHVVAGEGSPAKIMADRNLEVVSDTGALTAAVDEAIAANPAIADKVRGGKVAAAGALVGAVMKTTRGQADAKTVRELILERLGVQG</sequence>
<evidence type="ECO:0000255" key="1">
    <source>
        <dbReference type="HAMAP-Rule" id="MF_00121"/>
    </source>
</evidence>
<comment type="function">
    <text evidence="1">Allows the formation of correctly charged Asn-tRNA(Asn) or Gln-tRNA(Gln) through the transamidation of misacylated Asp-tRNA(Asn) or Glu-tRNA(Gln) in organisms which lack either or both of asparaginyl-tRNA or glutaminyl-tRNA synthetases. The reaction takes place in the presence of glutamine and ATP through an activated phospho-Asp-tRNA(Asn) or phospho-Glu-tRNA(Gln).</text>
</comment>
<comment type="catalytic activity">
    <reaction evidence="1">
        <text>L-glutamyl-tRNA(Gln) + L-glutamine + ATP + H2O = L-glutaminyl-tRNA(Gln) + L-glutamate + ADP + phosphate + H(+)</text>
        <dbReference type="Rhea" id="RHEA:17521"/>
        <dbReference type="Rhea" id="RHEA-COMP:9681"/>
        <dbReference type="Rhea" id="RHEA-COMP:9684"/>
        <dbReference type="ChEBI" id="CHEBI:15377"/>
        <dbReference type="ChEBI" id="CHEBI:15378"/>
        <dbReference type="ChEBI" id="CHEBI:29985"/>
        <dbReference type="ChEBI" id="CHEBI:30616"/>
        <dbReference type="ChEBI" id="CHEBI:43474"/>
        <dbReference type="ChEBI" id="CHEBI:58359"/>
        <dbReference type="ChEBI" id="CHEBI:78520"/>
        <dbReference type="ChEBI" id="CHEBI:78521"/>
        <dbReference type="ChEBI" id="CHEBI:456216"/>
    </reaction>
</comment>
<comment type="catalytic activity">
    <reaction evidence="1">
        <text>L-aspartyl-tRNA(Asn) + L-glutamine + ATP + H2O = L-asparaginyl-tRNA(Asn) + L-glutamate + ADP + phosphate + 2 H(+)</text>
        <dbReference type="Rhea" id="RHEA:14513"/>
        <dbReference type="Rhea" id="RHEA-COMP:9674"/>
        <dbReference type="Rhea" id="RHEA-COMP:9677"/>
        <dbReference type="ChEBI" id="CHEBI:15377"/>
        <dbReference type="ChEBI" id="CHEBI:15378"/>
        <dbReference type="ChEBI" id="CHEBI:29985"/>
        <dbReference type="ChEBI" id="CHEBI:30616"/>
        <dbReference type="ChEBI" id="CHEBI:43474"/>
        <dbReference type="ChEBI" id="CHEBI:58359"/>
        <dbReference type="ChEBI" id="CHEBI:78515"/>
        <dbReference type="ChEBI" id="CHEBI:78516"/>
        <dbReference type="ChEBI" id="CHEBI:456216"/>
    </reaction>
</comment>
<comment type="subunit">
    <text evidence="1">Heterotrimer of A, B and C subunits.</text>
</comment>
<comment type="similarity">
    <text evidence="1">Belongs to the GatB/GatE family. GatB subfamily.</text>
</comment>
<organism>
    <name type="scientific">Salinispora tropica (strain ATCC BAA-916 / DSM 44818 / JCM 13857 / NBRC 105044 / CNB-440)</name>
    <dbReference type="NCBI Taxonomy" id="369723"/>
    <lineage>
        <taxon>Bacteria</taxon>
        <taxon>Bacillati</taxon>
        <taxon>Actinomycetota</taxon>
        <taxon>Actinomycetes</taxon>
        <taxon>Micromonosporales</taxon>
        <taxon>Micromonosporaceae</taxon>
        <taxon>Salinispora</taxon>
    </lineage>
</organism>
<name>GATB_SALTO</name>
<dbReference type="EC" id="6.3.5.-" evidence="1"/>
<dbReference type="EMBL" id="CP000667">
    <property type="protein sequence ID" value="ABP53691.1"/>
    <property type="molecule type" value="Genomic_DNA"/>
</dbReference>
<dbReference type="RefSeq" id="WP_011905123.1">
    <property type="nucleotide sequence ID" value="NC_009380.1"/>
</dbReference>
<dbReference type="SMR" id="A4X491"/>
<dbReference type="STRING" id="369723.Strop_1221"/>
<dbReference type="KEGG" id="stp:Strop_1221"/>
<dbReference type="PATRIC" id="fig|369723.5.peg.1244"/>
<dbReference type="eggNOG" id="COG0064">
    <property type="taxonomic scope" value="Bacteria"/>
</dbReference>
<dbReference type="HOGENOM" id="CLU_019240_0_0_11"/>
<dbReference type="Proteomes" id="UP000000235">
    <property type="component" value="Chromosome"/>
</dbReference>
<dbReference type="GO" id="GO:0050566">
    <property type="term" value="F:asparaginyl-tRNA synthase (glutamine-hydrolyzing) activity"/>
    <property type="evidence" value="ECO:0007669"/>
    <property type="project" value="RHEA"/>
</dbReference>
<dbReference type="GO" id="GO:0005524">
    <property type="term" value="F:ATP binding"/>
    <property type="evidence" value="ECO:0007669"/>
    <property type="project" value="UniProtKB-KW"/>
</dbReference>
<dbReference type="GO" id="GO:0050567">
    <property type="term" value="F:glutaminyl-tRNA synthase (glutamine-hydrolyzing) activity"/>
    <property type="evidence" value="ECO:0007669"/>
    <property type="project" value="UniProtKB-UniRule"/>
</dbReference>
<dbReference type="GO" id="GO:0070681">
    <property type="term" value="P:glutaminyl-tRNAGln biosynthesis via transamidation"/>
    <property type="evidence" value="ECO:0007669"/>
    <property type="project" value="TreeGrafter"/>
</dbReference>
<dbReference type="GO" id="GO:0006412">
    <property type="term" value="P:translation"/>
    <property type="evidence" value="ECO:0007669"/>
    <property type="project" value="UniProtKB-UniRule"/>
</dbReference>
<dbReference type="FunFam" id="1.10.10.410:FF:000002">
    <property type="entry name" value="Aspartyl/glutamyl-tRNA(Asn/Gln) amidotransferase subunit B"/>
    <property type="match status" value="1"/>
</dbReference>
<dbReference type="Gene3D" id="1.10.10.410">
    <property type="match status" value="1"/>
</dbReference>
<dbReference type="HAMAP" id="MF_00121">
    <property type="entry name" value="GatB"/>
    <property type="match status" value="1"/>
</dbReference>
<dbReference type="InterPro" id="IPR017959">
    <property type="entry name" value="Asn/Gln-tRNA_amidoTrfase_suB/E"/>
</dbReference>
<dbReference type="InterPro" id="IPR006075">
    <property type="entry name" value="Asn/Gln-tRNA_Trfase_suB/E_cat"/>
</dbReference>
<dbReference type="InterPro" id="IPR018027">
    <property type="entry name" value="Asn/Gln_amidotransferase"/>
</dbReference>
<dbReference type="InterPro" id="IPR003789">
    <property type="entry name" value="Asn/Gln_tRNA_amidoTrase-B-like"/>
</dbReference>
<dbReference type="InterPro" id="IPR004413">
    <property type="entry name" value="GatB"/>
</dbReference>
<dbReference type="InterPro" id="IPR023168">
    <property type="entry name" value="GatB_Yqey_C_2"/>
</dbReference>
<dbReference type="InterPro" id="IPR017958">
    <property type="entry name" value="Gln-tRNA_amidoTrfase_suB_CS"/>
</dbReference>
<dbReference type="InterPro" id="IPR014746">
    <property type="entry name" value="Gln_synth/guanido_kin_cat_dom"/>
</dbReference>
<dbReference type="NCBIfam" id="TIGR00133">
    <property type="entry name" value="gatB"/>
    <property type="match status" value="1"/>
</dbReference>
<dbReference type="NCBIfam" id="NF004012">
    <property type="entry name" value="PRK05477.1-2"/>
    <property type="match status" value="1"/>
</dbReference>
<dbReference type="NCBIfam" id="NF004013">
    <property type="entry name" value="PRK05477.1-3"/>
    <property type="match status" value="1"/>
</dbReference>
<dbReference type="NCBIfam" id="NF004014">
    <property type="entry name" value="PRK05477.1-4"/>
    <property type="match status" value="1"/>
</dbReference>
<dbReference type="PANTHER" id="PTHR11659">
    <property type="entry name" value="GLUTAMYL-TRNA GLN AMIDOTRANSFERASE SUBUNIT B MITOCHONDRIAL AND PROKARYOTIC PET112-RELATED"/>
    <property type="match status" value="1"/>
</dbReference>
<dbReference type="PANTHER" id="PTHR11659:SF0">
    <property type="entry name" value="GLUTAMYL-TRNA(GLN) AMIDOTRANSFERASE SUBUNIT B, MITOCHONDRIAL"/>
    <property type="match status" value="1"/>
</dbReference>
<dbReference type="Pfam" id="PF02934">
    <property type="entry name" value="GatB_N"/>
    <property type="match status" value="1"/>
</dbReference>
<dbReference type="Pfam" id="PF02637">
    <property type="entry name" value="GatB_Yqey"/>
    <property type="match status" value="1"/>
</dbReference>
<dbReference type="SMART" id="SM00845">
    <property type="entry name" value="GatB_Yqey"/>
    <property type="match status" value="1"/>
</dbReference>
<dbReference type="SUPFAM" id="SSF89095">
    <property type="entry name" value="GatB/YqeY motif"/>
    <property type="match status" value="1"/>
</dbReference>
<dbReference type="SUPFAM" id="SSF55931">
    <property type="entry name" value="Glutamine synthetase/guanido kinase"/>
    <property type="match status" value="1"/>
</dbReference>
<dbReference type="PROSITE" id="PS01234">
    <property type="entry name" value="GATB"/>
    <property type="match status" value="1"/>
</dbReference>